<name>LUXS_CROS8</name>
<accession>A7MJ28</accession>
<organism>
    <name type="scientific">Cronobacter sakazakii (strain ATCC BAA-894)</name>
    <name type="common">Enterobacter sakazakii</name>
    <dbReference type="NCBI Taxonomy" id="290339"/>
    <lineage>
        <taxon>Bacteria</taxon>
        <taxon>Pseudomonadati</taxon>
        <taxon>Pseudomonadota</taxon>
        <taxon>Gammaproteobacteria</taxon>
        <taxon>Enterobacterales</taxon>
        <taxon>Enterobacteriaceae</taxon>
        <taxon>Cronobacter</taxon>
    </lineage>
</organism>
<sequence>MPLLDSFTVDHTRMEAPAVRVAKTMNTPHGDTITVFDLRFCVPNKEVMPEKGIHTLEHLFAGFMRDHLNGNGVEIIDISPMGCRTGFYMSLIGQPDEQRVADAWKAAMQDVLKVKAQNQIPELNVYQCGTYEMHSLEEAQEIARHIIERGVGVNSNDALALPKEKLQELHL</sequence>
<evidence type="ECO:0000255" key="1">
    <source>
        <dbReference type="HAMAP-Rule" id="MF_00091"/>
    </source>
</evidence>
<protein>
    <recommendedName>
        <fullName evidence="1">S-ribosylhomocysteine lyase</fullName>
        <ecNumber evidence="1">4.4.1.21</ecNumber>
    </recommendedName>
    <alternativeName>
        <fullName evidence="1">AI-2 synthesis protein</fullName>
    </alternativeName>
    <alternativeName>
        <fullName evidence="1">Autoinducer-2 production protein LuxS</fullName>
    </alternativeName>
</protein>
<keyword id="KW-0071">Autoinducer synthesis</keyword>
<keyword id="KW-0408">Iron</keyword>
<keyword id="KW-0456">Lyase</keyword>
<keyword id="KW-0479">Metal-binding</keyword>
<keyword id="KW-0673">Quorum sensing</keyword>
<keyword id="KW-1185">Reference proteome</keyword>
<feature type="chain" id="PRO_1000004843" description="S-ribosylhomocysteine lyase">
    <location>
        <begin position="1"/>
        <end position="171"/>
    </location>
</feature>
<feature type="binding site" evidence="1">
    <location>
        <position position="54"/>
    </location>
    <ligand>
        <name>Fe cation</name>
        <dbReference type="ChEBI" id="CHEBI:24875"/>
    </ligand>
</feature>
<feature type="binding site" evidence="1">
    <location>
        <position position="58"/>
    </location>
    <ligand>
        <name>Fe cation</name>
        <dbReference type="ChEBI" id="CHEBI:24875"/>
    </ligand>
</feature>
<feature type="binding site" evidence="1">
    <location>
        <position position="128"/>
    </location>
    <ligand>
        <name>Fe cation</name>
        <dbReference type="ChEBI" id="CHEBI:24875"/>
    </ligand>
</feature>
<proteinExistence type="inferred from homology"/>
<comment type="function">
    <text evidence="1">Involved in the synthesis of autoinducer 2 (AI-2) which is secreted by bacteria and is used to communicate both the cell density and the metabolic potential of the environment. The regulation of gene expression in response to changes in cell density is called quorum sensing. Catalyzes the transformation of S-ribosylhomocysteine (RHC) to homocysteine (HC) and 4,5-dihydroxy-2,3-pentadione (DPD).</text>
</comment>
<comment type="catalytic activity">
    <reaction evidence="1">
        <text>S-(5-deoxy-D-ribos-5-yl)-L-homocysteine = (S)-4,5-dihydroxypentane-2,3-dione + L-homocysteine</text>
        <dbReference type="Rhea" id="RHEA:17753"/>
        <dbReference type="ChEBI" id="CHEBI:29484"/>
        <dbReference type="ChEBI" id="CHEBI:58195"/>
        <dbReference type="ChEBI" id="CHEBI:58199"/>
        <dbReference type="EC" id="4.4.1.21"/>
    </reaction>
</comment>
<comment type="cofactor">
    <cofactor evidence="1">
        <name>Fe cation</name>
        <dbReference type="ChEBI" id="CHEBI:24875"/>
    </cofactor>
    <text evidence="1">Binds 1 Fe cation per subunit.</text>
</comment>
<comment type="subunit">
    <text evidence="1">Homodimer.</text>
</comment>
<comment type="similarity">
    <text evidence="1">Belongs to the LuxS family.</text>
</comment>
<reference key="1">
    <citation type="journal article" date="2010" name="PLoS ONE">
        <title>Genome sequence of Cronobacter sakazakii BAA-894 and comparative genomic hybridization analysis with other Cronobacter species.</title>
        <authorList>
            <person name="Kucerova E."/>
            <person name="Clifton S.W."/>
            <person name="Xia X.Q."/>
            <person name="Long F."/>
            <person name="Porwollik S."/>
            <person name="Fulton L."/>
            <person name="Fronick C."/>
            <person name="Minx P."/>
            <person name="Kyung K."/>
            <person name="Warren W."/>
            <person name="Fulton R."/>
            <person name="Feng D."/>
            <person name="Wollam A."/>
            <person name="Shah N."/>
            <person name="Bhonagiri V."/>
            <person name="Nash W.E."/>
            <person name="Hallsworth-Pepin K."/>
            <person name="Wilson R.K."/>
            <person name="McClelland M."/>
            <person name="Forsythe S.J."/>
        </authorList>
    </citation>
    <scope>NUCLEOTIDE SEQUENCE [LARGE SCALE GENOMIC DNA]</scope>
    <source>
        <strain>ATCC BAA-894</strain>
    </source>
</reference>
<dbReference type="EC" id="4.4.1.21" evidence="1"/>
<dbReference type="EMBL" id="CP000783">
    <property type="protein sequence ID" value="ABU75865.1"/>
    <property type="molecule type" value="Genomic_DNA"/>
</dbReference>
<dbReference type="RefSeq" id="WP_012123949.1">
    <property type="nucleotide sequence ID" value="NC_009778.1"/>
</dbReference>
<dbReference type="SMR" id="A7MJ28"/>
<dbReference type="KEGG" id="esa:ESA_00581"/>
<dbReference type="PATRIC" id="fig|290339.8.peg.520"/>
<dbReference type="HOGENOM" id="CLU_107531_2_0_6"/>
<dbReference type="Proteomes" id="UP000000260">
    <property type="component" value="Chromosome"/>
</dbReference>
<dbReference type="GO" id="GO:0005506">
    <property type="term" value="F:iron ion binding"/>
    <property type="evidence" value="ECO:0007669"/>
    <property type="project" value="InterPro"/>
</dbReference>
<dbReference type="GO" id="GO:0043768">
    <property type="term" value="F:S-ribosylhomocysteine lyase activity"/>
    <property type="evidence" value="ECO:0007669"/>
    <property type="project" value="UniProtKB-UniRule"/>
</dbReference>
<dbReference type="GO" id="GO:0009372">
    <property type="term" value="P:quorum sensing"/>
    <property type="evidence" value="ECO:0007669"/>
    <property type="project" value="UniProtKB-UniRule"/>
</dbReference>
<dbReference type="FunFam" id="3.30.1360.80:FF:000001">
    <property type="entry name" value="S-ribosylhomocysteine lyase"/>
    <property type="match status" value="1"/>
</dbReference>
<dbReference type="Gene3D" id="3.30.1360.80">
    <property type="entry name" value="S-ribosylhomocysteinase (LuxS)"/>
    <property type="match status" value="1"/>
</dbReference>
<dbReference type="HAMAP" id="MF_00091">
    <property type="entry name" value="LuxS"/>
    <property type="match status" value="1"/>
</dbReference>
<dbReference type="InterPro" id="IPR037005">
    <property type="entry name" value="LuxS_sf"/>
</dbReference>
<dbReference type="InterPro" id="IPR011249">
    <property type="entry name" value="Metalloenz_LuxS/M16"/>
</dbReference>
<dbReference type="InterPro" id="IPR003815">
    <property type="entry name" value="S-ribosylhomocysteinase"/>
</dbReference>
<dbReference type="NCBIfam" id="NF002602">
    <property type="entry name" value="PRK02260.1-2"/>
    <property type="match status" value="1"/>
</dbReference>
<dbReference type="PANTHER" id="PTHR35799">
    <property type="entry name" value="S-RIBOSYLHOMOCYSTEINE LYASE"/>
    <property type="match status" value="1"/>
</dbReference>
<dbReference type="PANTHER" id="PTHR35799:SF1">
    <property type="entry name" value="S-RIBOSYLHOMOCYSTEINE LYASE"/>
    <property type="match status" value="1"/>
</dbReference>
<dbReference type="Pfam" id="PF02664">
    <property type="entry name" value="LuxS"/>
    <property type="match status" value="1"/>
</dbReference>
<dbReference type="PIRSF" id="PIRSF006160">
    <property type="entry name" value="AI2"/>
    <property type="match status" value="1"/>
</dbReference>
<dbReference type="PRINTS" id="PR01487">
    <property type="entry name" value="LUXSPROTEIN"/>
</dbReference>
<dbReference type="SUPFAM" id="SSF63411">
    <property type="entry name" value="LuxS/MPP-like metallohydrolase"/>
    <property type="match status" value="1"/>
</dbReference>
<gene>
    <name evidence="1" type="primary">luxS</name>
    <name type="ordered locus">ESA_00581</name>
</gene>